<keyword id="KW-0396">Initiation factor</keyword>
<keyword id="KW-0648">Protein biosynthesis</keyword>
<sequence>MQKKPMAPQQPTRVRTPREENNEILGIIEQMLGASRVRVRCMDGHTRMGRIPGKLKRKIWVREGDIVIVVPWEVQSDQKCDIIWRYTKGQVSWLSKKGYLKQAYD</sequence>
<reference key="1">
    <citation type="submission" date="2007-06" db="EMBL/GenBank/DDBJ databases">
        <title>Complete sequence of Methanococcus aeolicus Nankai-3.</title>
        <authorList>
            <consortium name="US DOE Joint Genome Institute"/>
            <person name="Copeland A."/>
            <person name="Lucas S."/>
            <person name="Lapidus A."/>
            <person name="Barry K."/>
            <person name="Glavina del Rio T."/>
            <person name="Dalin E."/>
            <person name="Tice H."/>
            <person name="Pitluck S."/>
            <person name="Chain P."/>
            <person name="Malfatti S."/>
            <person name="Shin M."/>
            <person name="Vergez L."/>
            <person name="Schmutz J."/>
            <person name="Larimer F."/>
            <person name="Land M."/>
            <person name="Hauser L."/>
            <person name="Kyrpides N."/>
            <person name="Lykidis A."/>
            <person name="Sieprawska-Lupa M."/>
            <person name="Whitman W.B."/>
            <person name="Richardson P."/>
        </authorList>
    </citation>
    <scope>NUCLEOTIDE SEQUENCE [LARGE SCALE GENOMIC DNA]</scope>
    <source>
        <strain>ATCC BAA-1280 / DSM 17508 / OCM 812 / Nankai-3</strain>
    </source>
</reference>
<dbReference type="EMBL" id="CP000743">
    <property type="protein sequence ID" value="ABR56180.1"/>
    <property type="molecule type" value="Genomic_DNA"/>
</dbReference>
<dbReference type="SMR" id="A6UUK8"/>
<dbReference type="STRING" id="419665.Maeo_0595"/>
<dbReference type="KEGG" id="mae:Maeo_0595"/>
<dbReference type="eggNOG" id="arCOG01179">
    <property type="taxonomic scope" value="Archaea"/>
</dbReference>
<dbReference type="HOGENOM" id="CLU_109098_1_2_2"/>
<dbReference type="Proteomes" id="UP000001106">
    <property type="component" value="Chromosome"/>
</dbReference>
<dbReference type="GO" id="GO:0003723">
    <property type="term" value="F:RNA binding"/>
    <property type="evidence" value="ECO:0007669"/>
    <property type="project" value="InterPro"/>
</dbReference>
<dbReference type="GO" id="GO:0003743">
    <property type="term" value="F:translation initiation factor activity"/>
    <property type="evidence" value="ECO:0007669"/>
    <property type="project" value="UniProtKB-UniRule"/>
</dbReference>
<dbReference type="CDD" id="cd05793">
    <property type="entry name" value="S1_IF1A"/>
    <property type="match status" value="1"/>
</dbReference>
<dbReference type="Gene3D" id="2.40.50.140">
    <property type="entry name" value="Nucleic acid-binding proteins"/>
    <property type="match status" value="1"/>
</dbReference>
<dbReference type="HAMAP" id="MF_00216">
    <property type="entry name" value="aIF_1A"/>
    <property type="match status" value="1"/>
</dbReference>
<dbReference type="InterPro" id="IPR012340">
    <property type="entry name" value="NA-bd_OB-fold"/>
</dbReference>
<dbReference type="InterPro" id="IPR006196">
    <property type="entry name" value="RNA-binding_domain_S1_IF1"/>
</dbReference>
<dbReference type="InterPro" id="IPR001253">
    <property type="entry name" value="TIF_eIF-1A"/>
</dbReference>
<dbReference type="InterPro" id="IPR018104">
    <property type="entry name" value="TIF_eIF-1A_CS"/>
</dbReference>
<dbReference type="NCBIfam" id="TIGR00523">
    <property type="entry name" value="eIF-1A"/>
    <property type="match status" value="1"/>
</dbReference>
<dbReference type="NCBIfam" id="NF003084">
    <property type="entry name" value="PRK04012.1-3"/>
    <property type="match status" value="1"/>
</dbReference>
<dbReference type="NCBIfam" id="NF003085">
    <property type="entry name" value="PRK04012.1-5"/>
    <property type="match status" value="1"/>
</dbReference>
<dbReference type="PANTHER" id="PTHR21668">
    <property type="entry name" value="EIF-1A"/>
    <property type="match status" value="1"/>
</dbReference>
<dbReference type="Pfam" id="PF01176">
    <property type="entry name" value="eIF-1a"/>
    <property type="match status" value="1"/>
</dbReference>
<dbReference type="SMART" id="SM00652">
    <property type="entry name" value="eIF1a"/>
    <property type="match status" value="1"/>
</dbReference>
<dbReference type="SUPFAM" id="SSF50249">
    <property type="entry name" value="Nucleic acid-binding proteins"/>
    <property type="match status" value="1"/>
</dbReference>
<dbReference type="PROSITE" id="PS01262">
    <property type="entry name" value="IF1A"/>
    <property type="match status" value="1"/>
</dbReference>
<dbReference type="PROSITE" id="PS50832">
    <property type="entry name" value="S1_IF1_TYPE"/>
    <property type="match status" value="1"/>
</dbReference>
<protein>
    <recommendedName>
        <fullName evidence="1">Translation initiation factor 1A</fullName>
        <shortName evidence="1">aIF-1A</shortName>
    </recommendedName>
</protein>
<proteinExistence type="inferred from homology"/>
<accession>A6UUK8</accession>
<name>IF1A_META3</name>
<feature type="chain" id="PRO_1000043279" description="Translation initiation factor 1A">
    <location>
        <begin position="1"/>
        <end position="105"/>
    </location>
</feature>
<feature type="domain" description="S1-like" evidence="1">
    <location>
        <begin position="12"/>
        <end position="87"/>
    </location>
</feature>
<evidence type="ECO:0000255" key="1">
    <source>
        <dbReference type="HAMAP-Rule" id="MF_00216"/>
    </source>
</evidence>
<organism>
    <name type="scientific">Methanococcus aeolicus (strain ATCC BAA-1280 / DSM 17508 / OCM 812 / Nankai-3)</name>
    <dbReference type="NCBI Taxonomy" id="419665"/>
    <lineage>
        <taxon>Archaea</taxon>
        <taxon>Methanobacteriati</taxon>
        <taxon>Methanobacteriota</taxon>
        <taxon>Methanomada group</taxon>
        <taxon>Methanococci</taxon>
        <taxon>Methanococcales</taxon>
        <taxon>Methanococcaceae</taxon>
        <taxon>Methanococcus</taxon>
    </lineage>
</organism>
<gene>
    <name type="primary">eIF1A</name>
    <name type="ordered locus">Maeo_0595</name>
</gene>
<comment type="function">
    <text evidence="1">Seems to be required for maximal rate of protein biosynthesis. Enhances ribosome dissociation into subunits and stabilizes the binding of the initiator Met-tRNA(I) to 40 S ribosomal subunits.</text>
</comment>
<comment type="similarity">
    <text evidence="1">Belongs to the eIF-1A family.</text>
</comment>